<sequence length="31" mass="4122">MPRRRRASRPVRRRRRPRVSRRRRRGGRRRR</sequence>
<feature type="initiator methionine" description="Removed" evidence="1">
    <location>
        <position position="1"/>
    </location>
</feature>
<feature type="peptide" id="PRO_0000044307" description="Protamine CIII">
    <location>
        <begin position="2"/>
        <end position="31"/>
    </location>
</feature>
<feature type="region of interest" description="Disordered" evidence="2">
    <location>
        <begin position="1"/>
        <end position="31"/>
    </location>
</feature>
<feature type="sequence variant" description="In 18% of the CIII.">
    <original>V</original>
    <variation>I</variation>
    <location>
        <position position="11"/>
    </location>
</feature>
<feature type="sequence variant" description="In 18% of the CIII.">
    <original>V</original>
    <variation>P</variation>
    <location>
        <position position="11"/>
    </location>
</feature>
<evidence type="ECO:0000250" key="1"/>
<evidence type="ECO:0000256" key="2">
    <source>
        <dbReference type="SAM" id="MobiDB-lite"/>
    </source>
</evidence>
<name>PRTC3_ONCMY</name>
<proteinExistence type="evidence at transcript level"/>
<protein>
    <recommendedName>
        <fullName>Protamine CIII</fullName>
    </recommendedName>
    <alternativeName>
        <fullName>Protamine PPC 6B</fullName>
    </alternativeName>
</protein>
<organism>
    <name type="scientific">Oncorhynchus mykiss</name>
    <name type="common">Rainbow trout</name>
    <name type="synonym">Salmo gairdneri</name>
    <dbReference type="NCBI Taxonomy" id="8022"/>
    <lineage>
        <taxon>Eukaryota</taxon>
        <taxon>Metazoa</taxon>
        <taxon>Chordata</taxon>
        <taxon>Craniata</taxon>
        <taxon>Vertebrata</taxon>
        <taxon>Euteleostomi</taxon>
        <taxon>Actinopterygii</taxon>
        <taxon>Neopterygii</taxon>
        <taxon>Teleostei</taxon>
        <taxon>Protacanthopterygii</taxon>
        <taxon>Salmoniformes</taxon>
        <taxon>Salmonidae</taxon>
        <taxon>Salmoninae</taxon>
        <taxon>Oncorhynchus</taxon>
    </lineage>
</organism>
<comment type="function">
    <text>Protamines substitute for histones in the chromatin of sperm during the haploid phase of spermatogenesis. They compact sperm DNA into a highly condensed, stable and inactive complex.</text>
</comment>
<comment type="subcellular location">
    <subcellularLocation>
        <location>Nucleus</location>
    </subcellularLocation>
    <subcellularLocation>
        <location>Chromosome</location>
    </subcellularLocation>
</comment>
<comment type="tissue specificity">
    <text>Testis.</text>
</comment>
<comment type="miscellaneous">
    <text>The protamine CIII/PPC 6B sequence is shown.</text>
</comment>
<reference key="1">
    <citation type="journal article" date="1981" name="Nucleic Acids Res.">
        <title>Molecular analysis of the protamine multi-gene family in rainbow trout testis.</title>
        <authorList>
            <person name="Gedamu L."/>
            <person name="Wosnick M.A."/>
            <person name="Connor W."/>
            <person name="Watson D.C."/>
            <person name="Dixon G.H."/>
            <person name="Iatrou K."/>
        </authorList>
    </citation>
    <scope>NUCLEOTIDE SEQUENCE [MRNA] (CLONE CIII)</scope>
</reference>
<reference key="2">
    <citation type="journal article" date="1981" name="J. Biochem.">
        <title>Closely related mRNA sequences of protamines in rainbow trout testis.</title>
        <authorList>
            <person name="Sakai M."/>
            <person name="Fujii-Kuriyama Y."/>
            <person name="Saito T."/>
            <person name="Muramatsu M."/>
        </authorList>
    </citation>
    <scope>NUCLEOTIDE SEQUENCE [MRNA] (CLONE PPC 6B)</scope>
</reference>
<accession>P02331</accession>
<dbReference type="EMBL" id="K03052">
    <property type="status" value="NOT_ANNOTATED_CDS"/>
    <property type="molecule type" value="mRNA"/>
</dbReference>
<dbReference type="PIR" id="A02673">
    <property type="entry name" value="IRTRC3"/>
</dbReference>
<dbReference type="Proteomes" id="UP000694395">
    <property type="component" value="Unplaced"/>
</dbReference>
<dbReference type="GO" id="GO:0000786">
    <property type="term" value="C:nucleosome"/>
    <property type="evidence" value="ECO:0007669"/>
    <property type="project" value="UniProtKB-KW"/>
</dbReference>
<dbReference type="GO" id="GO:0005634">
    <property type="term" value="C:nucleus"/>
    <property type="evidence" value="ECO:0007669"/>
    <property type="project" value="UniProtKB-SubCell"/>
</dbReference>
<dbReference type="GO" id="GO:0003677">
    <property type="term" value="F:DNA binding"/>
    <property type="evidence" value="ECO:0007669"/>
    <property type="project" value="UniProtKB-KW"/>
</dbReference>
<dbReference type="GO" id="GO:0030154">
    <property type="term" value="P:cell differentiation"/>
    <property type="evidence" value="ECO:0007669"/>
    <property type="project" value="UniProtKB-KW"/>
</dbReference>
<dbReference type="GO" id="GO:0030261">
    <property type="term" value="P:chromosome condensation"/>
    <property type="evidence" value="ECO:0007669"/>
    <property type="project" value="UniProtKB-KW"/>
</dbReference>
<dbReference type="GO" id="GO:0007283">
    <property type="term" value="P:spermatogenesis"/>
    <property type="evidence" value="ECO:0007669"/>
    <property type="project" value="UniProtKB-KW"/>
</dbReference>
<keyword id="KW-0158">Chromosome</keyword>
<keyword id="KW-0217">Developmental protein</keyword>
<keyword id="KW-0221">Differentiation</keyword>
<keyword id="KW-0226">DNA condensation</keyword>
<keyword id="KW-0238">DNA-binding</keyword>
<keyword id="KW-0544">Nucleosome core</keyword>
<keyword id="KW-0539">Nucleus</keyword>
<keyword id="KW-0744">Spermatogenesis</keyword>